<evidence type="ECO:0000255" key="1">
    <source>
        <dbReference type="HAMAP-Rule" id="MF_01151"/>
    </source>
</evidence>
<evidence type="ECO:0000256" key="2">
    <source>
        <dbReference type="SAM" id="MobiDB-lite"/>
    </source>
</evidence>
<comment type="function">
    <text evidence="1">Participates actively in the response to hyperosmotic and heat shock by preventing the aggregation of stress-denatured proteins, in association with DnaK and GrpE. It is the nucleotide exchange factor for DnaK and may function as a thermosensor. Unfolded proteins bind initially to DnaJ; upon interaction with the DnaJ-bound protein, DnaK hydrolyzes its bound ATP, resulting in the formation of a stable complex. GrpE releases ADP from DnaK; ATP binding to DnaK triggers the release of the substrate protein, thus completing the reaction cycle. Several rounds of ATP-dependent interactions between DnaJ, DnaK and GrpE are required for fully efficient folding.</text>
</comment>
<comment type="subunit">
    <text evidence="1">Homodimer.</text>
</comment>
<comment type="subcellular location">
    <subcellularLocation>
        <location evidence="1">Cytoplasm</location>
    </subcellularLocation>
</comment>
<comment type="similarity">
    <text evidence="1">Belongs to the GrpE family.</text>
</comment>
<feature type="chain" id="PRO_1000164212" description="Protein GrpE">
    <location>
        <begin position="1"/>
        <end position="186"/>
    </location>
</feature>
<feature type="region of interest" description="Disordered" evidence="2">
    <location>
        <begin position="1"/>
        <end position="20"/>
    </location>
</feature>
<feature type="compositionally biased region" description="Polar residues" evidence="2">
    <location>
        <begin position="1"/>
        <end position="15"/>
    </location>
</feature>
<proteinExistence type="inferred from homology"/>
<accession>B7V1H4</accession>
<dbReference type="EMBL" id="FM209186">
    <property type="protein sequence ID" value="CAW29901.1"/>
    <property type="molecule type" value="Genomic_DNA"/>
</dbReference>
<dbReference type="RefSeq" id="WP_012614575.1">
    <property type="nucleotide sequence ID" value="NC_011770.1"/>
</dbReference>
<dbReference type="SMR" id="B7V1H4"/>
<dbReference type="KEGG" id="pag:PLES_51471"/>
<dbReference type="HOGENOM" id="CLU_057217_6_0_6"/>
<dbReference type="GO" id="GO:0005829">
    <property type="term" value="C:cytosol"/>
    <property type="evidence" value="ECO:0007669"/>
    <property type="project" value="TreeGrafter"/>
</dbReference>
<dbReference type="GO" id="GO:0000774">
    <property type="term" value="F:adenyl-nucleotide exchange factor activity"/>
    <property type="evidence" value="ECO:0007669"/>
    <property type="project" value="InterPro"/>
</dbReference>
<dbReference type="GO" id="GO:0042803">
    <property type="term" value="F:protein homodimerization activity"/>
    <property type="evidence" value="ECO:0007669"/>
    <property type="project" value="InterPro"/>
</dbReference>
<dbReference type="GO" id="GO:0051087">
    <property type="term" value="F:protein-folding chaperone binding"/>
    <property type="evidence" value="ECO:0007669"/>
    <property type="project" value="InterPro"/>
</dbReference>
<dbReference type="GO" id="GO:0051082">
    <property type="term" value="F:unfolded protein binding"/>
    <property type="evidence" value="ECO:0007669"/>
    <property type="project" value="TreeGrafter"/>
</dbReference>
<dbReference type="GO" id="GO:0006457">
    <property type="term" value="P:protein folding"/>
    <property type="evidence" value="ECO:0007669"/>
    <property type="project" value="InterPro"/>
</dbReference>
<dbReference type="CDD" id="cd00446">
    <property type="entry name" value="GrpE"/>
    <property type="match status" value="1"/>
</dbReference>
<dbReference type="FunFam" id="2.30.22.10:FF:000001">
    <property type="entry name" value="Protein GrpE"/>
    <property type="match status" value="1"/>
</dbReference>
<dbReference type="FunFam" id="3.90.20.20:FF:000014">
    <property type="entry name" value="Protein GrpE"/>
    <property type="match status" value="1"/>
</dbReference>
<dbReference type="Gene3D" id="3.90.20.20">
    <property type="match status" value="1"/>
</dbReference>
<dbReference type="Gene3D" id="2.30.22.10">
    <property type="entry name" value="Head domain of nucleotide exchange factor GrpE"/>
    <property type="match status" value="1"/>
</dbReference>
<dbReference type="HAMAP" id="MF_01151">
    <property type="entry name" value="GrpE"/>
    <property type="match status" value="1"/>
</dbReference>
<dbReference type="InterPro" id="IPR000740">
    <property type="entry name" value="GrpE"/>
</dbReference>
<dbReference type="InterPro" id="IPR013805">
    <property type="entry name" value="GrpE_coiled_coil"/>
</dbReference>
<dbReference type="InterPro" id="IPR009012">
    <property type="entry name" value="GrpE_head"/>
</dbReference>
<dbReference type="NCBIfam" id="NF010737">
    <property type="entry name" value="PRK14139.1"/>
    <property type="match status" value="1"/>
</dbReference>
<dbReference type="NCBIfam" id="NF010738">
    <property type="entry name" value="PRK14140.1"/>
    <property type="match status" value="1"/>
</dbReference>
<dbReference type="NCBIfam" id="NF010748">
    <property type="entry name" value="PRK14150.1"/>
    <property type="match status" value="1"/>
</dbReference>
<dbReference type="NCBIfam" id="NF010749">
    <property type="entry name" value="PRK14151.1"/>
    <property type="match status" value="1"/>
</dbReference>
<dbReference type="PANTHER" id="PTHR21237">
    <property type="entry name" value="GRPE PROTEIN"/>
    <property type="match status" value="1"/>
</dbReference>
<dbReference type="PANTHER" id="PTHR21237:SF23">
    <property type="entry name" value="GRPE PROTEIN HOMOLOG, MITOCHONDRIAL"/>
    <property type="match status" value="1"/>
</dbReference>
<dbReference type="Pfam" id="PF01025">
    <property type="entry name" value="GrpE"/>
    <property type="match status" value="1"/>
</dbReference>
<dbReference type="PRINTS" id="PR00773">
    <property type="entry name" value="GRPEPROTEIN"/>
</dbReference>
<dbReference type="SUPFAM" id="SSF58014">
    <property type="entry name" value="Coiled-coil domain of nucleotide exchange factor GrpE"/>
    <property type="match status" value="1"/>
</dbReference>
<dbReference type="SUPFAM" id="SSF51064">
    <property type="entry name" value="Head domain of nucleotide exchange factor GrpE"/>
    <property type="match status" value="1"/>
</dbReference>
<protein>
    <recommendedName>
        <fullName evidence="1">Protein GrpE</fullName>
    </recommendedName>
    <alternativeName>
        <fullName evidence="1">HSP-70 cofactor</fullName>
    </alternativeName>
</protein>
<organism>
    <name type="scientific">Pseudomonas aeruginosa (strain LESB58)</name>
    <dbReference type="NCBI Taxonomy" id="557722"/>
    <lineage>
        <taxon>Bacteria</taxon>
        <taxon>Pseudomonadati</taxon>
        <taxon>Pseudomonadota</taxon>
        <taxon>Gammaproteobacteria</taxon>
        <taxon>Pseudomonadales</taxon>
        <taxon>Pseudomonadaceae</taxon>
        <taxon>Pseudomonas</taxon>
    </lineage>
</organism>
<gene>
    <name evidence="1" type="primary">grpE</name>
    <name type="ordered locus">PLES_51471</name>
</gene>
<keyword id="KW-0143">Chaperone</keyword>
<keyword id="KW-0963">Cytoplasm</keyword>
<keyword id="KW-0346">Stress response</keyword>
<sequence length="186" mass="20728">MADEQQTLDQQTPEQPTGAAEDLTARVQELEEQLAAAQDQALRMVADLQNVRRRAEQDVEKAHKFALEKFAGDLLAVVDTLERGLEMSDPNDEAIKPMREGMELTLKMFDDTLRRYQVEALNPEGEPFNPEQYQAMAMQESASAEPGSVLKVFQKGYLLNGRLLRPAMVVVSKAPAETPPSIDEQA</sequence>
<reference key="1">
    <citation type="journal article" date="2009" name="Genome Res.">
        <title>Newly introduced genomic prophage islands are critical determinants of in vivo competitiveness in the Liverpool epidemic strain of Pseudomonas aeruginosa.</title>
        <authorList>
            <person name="Winstanley C."/>
            <person name="Langille M.G.I."/>
            <person name="Fothergill J.L."/>
            <person name="Kukavica-Ibrulj I."/>
            <person name="Paradis-Bleau C."/>
            <person name="Sanschagrin F."/>
            <person name="Thomson N.R."/>
            <person name="Winsor G.L."/>
            <person name="Quail M.A."/>
            <person name="Lennard N."/>
            <person name="Bignell A."/>
            <person name="Clarke L."/>
            <person name="Seeger K."/>
            <person name="Saunders D."/>
            <person name="Harris D."/>
            <person name="Parkhill J."/>
            <person name="Hancock R.E.W."/>
            <person name="Brinkman F.S.L."/>
            <person name="Levesque R.C."/>
        </authorList>
    </citation>
    <scope>NUCLEOTIDE SEQUENCE [LARGE SCALE GENOMIC DNA]</scope>
    <source>
        <strain>LESB58</strain>
    </source>
</reference>
<name>GRPE_PSEA8</name>